<reference key="1">
    <citation type="journal article" date="1998" name="Science">
        <title>Genome sequence of the nematode C. elegans: a platform for investigating biology.</title>
        <authorList>
            <consortium name="The C. elegans sequencing consortium"/>
        </authorList>
    </citation>
    <scope>NUCLEOTIDE SEQUENCE [LARGE SCALE GENOMIC DNA]</scope>
    <source>
        <strain>Bristol N2</strain>
    </source>
</reference>
<protein>
    <recommendedName>
        <fullName evidence="4">Serine protease inhibitor 1 protein</fullName>
    </recommendedName>
    <alternativeName>
        <fullName>Inhibitor of serine protease-like protein 1</fullName>
    </alternativeName>
    <alternativeName>
        <fullName>Putative trypsin inhibitor isl-1</fullName>
    </alternativeName>
</protein>
<keyword id="KW-1015">Disulfide bond</keyword>
<keyword id="KW-0646">Protease inhibitor</keyword>
<keyword id="KW-1185">Reference proteome</keyword>
<keyword id="KW-0964">Secreted</keyword>
<keyword id="KW-0722">Serine protease inhibitor</keyword>
<keyword id="KW-0732">Signal</keyword>
<gene>
    <name evidence="4" type="primary">spi-1</name>
    <name evidence="4" type="synonym">isl-1</name>
    <name evidence="4" type="ORF">R10H1.4</name>
</gene>
<evidence type="ECO:0000250" key="1"/>
<evidence type="ECO:0000255" key="2"/>
<evidence type="ECO:0000305" key="3"/>
<evidence type="ECO:0000312" key="4">
    <source>
        <dbReference type="WormBase" id="R10H1.4"/>
    </source>
</evidence>
<proteinExistence type="inferred from homology"/>
<feature type="signal peptide" evidence="2">
    <location>
        <begin position="1"/>
        <end position="20"/>
    </location>
</feature>
<feature type="chain" id="PRO_0000034309" description="Serine protease inhibitor 1 protein" evidence="3">
    <location>
        <begin position="21"/>
        <end position="100"/>
    </location>
</feature>
<feature type="domain" description="TIL">
    <location>
        <begin position="42"/>
        <end position="93"/>
    </location>
</feature>
<feature type="disulfide bond" evidence="1">
    <location>
        <begin position="42"/>
        <end position="74"/>
    </location>
</feature>
<feature type="disulfide bond" evidence="1">
    <location>
        <begin position="51"/>
        <end position="69"/>
    </location>
</feature>
<feature type="disulfide bond" evidence="1">
    <location>
        <begin position="54"/>
        <end position="65"/>
    </location>
</feature>
<feature type="disulfide bond" evidence="1">
    <location>
        <begin position="58"/>
        <end position="93"/>
    </location>
</feature>
<feature type="disulfide bond" evidence="1">
    <location>
        <begin position="76"/>
        <end position="90"/>
    </location>
</feature>
<sequence length="100" mass="11366">MKHLLIVSLVFVTIIWKIECETDMYDDSSIVKTEETEEVKPCGLNEVWMVCSSCEEECGKTPQPCPRICQPARCQCPAHKGYRRDGQGNCIFCHDSVPKL</sequence>
<dbReference type="EMBL" id="FO080701">
    <property type="protein sequence ID" value="CCD65951.1"/>
    <property type="molecule type" value="Genomic_DNA"/>
</dbReference>
<dbReference type="RefSeq" id="NP_872050.1">
    <property type="nucleotide sequence ID" value="NM_182250.4"/>
</dbReference>
<dbReference type="SMR" id="Q8MPZ7"/>
<dbReference type="FunCoup" id="Q8MPZ7">
    <property type="interactions" value="5"/>
</dbReference>
<dbReference type="STRING" id="6239.R10H1.4.1"/>
<dbReference type="PaxDb" id="6239-R10H1.4"/>
<dbReference type="PeptideAtlas" id="Q8MPZ7"/>
<dbReference type="EnsemblMetazoa" id="R10H1.4.1">
    <property type="protein sequence ID" value="R10H1.4.1"/>
    <property type="gene ID" value="WBGene00023416"/>
</dbReference>
<dbReference type="EnsemblMetazoa" id="R10H1.4.2">
    <property type="protein sequence ID" value="R10H1.4.2"/>
    <property type="gene ID" value="WBGene00023416"/>
</dbReference>
<dbReference type="GeneID" id="174219"/>
<dbReference type="KEGG" id="cel:CELE_R10H1.4"/>
<dbReference type="UCSC" id="R10H1.4">
    <property type="organism name" value="c. elegans"/>
</dbReference>
<dbReference type="AGR" id="WB:WBGene00023416"/>
<dbReference type="CTD" id="174219"/>
<dbReference type="WormBase" id="R10H1.4">
    <property type="protein sequence ID" value="CE31821"/>
    <property type="gene ID" value="WBGene00023416"/>
    <property type="gene designation" value="spi-1"/>
</dbReference>
<dbReference type="eggNOG" id="ENOG502TIBF">
    <property type="taxonomic scope" value="Eukaryota"/>
</dbReference>
<dbReference type="HOGENOM" id="CLU_2308529_0_0_1"/>
<dbReference type="InParanoid" id="Q8MPZ7"/>
<dbReference type="OMA" id="VETHSCK"/>
<dbReference type="OrthoDB" id="5788972at2759"/>
<dbReference type="PRO" id="PR:Q8MPZ7"/>
<dbReference type="Proteomes" id="UP000001940">
    <property type="component" value="Chromosome II"/>
</dbReference>
<dbReference type="Bgee" id="WBGene00023416">
    <property type="expression patterns" value="Expressed in pharyngeal muscle cell (C elegans) and 3 other cell types or tissues"/>
</dbReference>
<dbReference type="GO" id="GO:0005576">
    <property type="term" value="C:extracellular region"/>
    <property type="evidence" value="ECO:0007669"/>
    <property type="project" value="UniProtKB-SubCell"/>
</dbReference>
<dbReference type="GO" id="GO:0004867">
    <property type="term" value="F:serine-type endopeptidase inhibitor activity"/>
    <property type="evidence" value="ECO:0007669"/>
    <property type="project" value="UniProtKB-KW"/>
</dbReference>
<dbReference type="CDD" id="cd19941">
    <property type="entry name" value="TIL"/>
    <property type="match status" value="1"/>
</dbReference>
<dbReference type="Gene3D" id="2.10.25.10">
    <property type="entry name" value="Laminin"/>
    <property type="match status" value="1"/>
</dbReference>
<dbReference type="InterPro" id="IPR036084">
    <property type="entry name" value="Ser_inhib-like_sf"/>
</dbReference>
<dbReference type="SUPFAM" id="SSF57567">
    <property type="entry name" value="Serine protease inhibitors"/>
    <property type="match status" value="1"/>
</dbReference>
<accession>Q8MPZ7</accession>
<organism>
    <name type="scientific">Caenorhabditis elegans</name>
    <dbReference type="NCBI Taxonomy" id="6239"/>
    <lineage>
        <taxon>Eukaryota</taxon>
        <taxon>Metazoa</taxon>
        <taxon>Ecdysozoa</taxon>
        <taxon>Nematoda</taxon>
        <taxon>Chromadorea</taxon>
        <taxon>Rhabditida</taxon>
        <taxon>Rhabditina</taxon>
        <taxon>Rhabditomorpha</taxon>
        <taxon>Rhabditoidea</taxon>
        <taxon>Rhabditidae</taxon>
        <taxon>Peloderinae</taxon>
        <taxon>Caenorhabditis</taxon>
    </lineage>
</organism>
<comment type="subcellular location">
    <subcellularLocation>
        <location evidence="3">Secreted</location>
    </subcellularLocation>
</comment>
<name>SPI1_CAEEL</name>